<reference key="1">
    <citation type="journal article" date="2002" name="J. Bacteriol.">
        <title>Genome sequence and analysis of the oral bacterium Fusobacterium nucleatum strain ATCC 25586.</title>
        <authorList>
            <person name="Kapatral V."/>
            <person name="Anderson I."/>
            <person name="Ivanova N."/>
            <person name="Reznik G."/>
            <person name="Los T."/>
            <person name="Lykidis A."/>
            <person name="Bhattacharyya A."/>
            <person name="Bartman A."/>
            <person name="Gardner W."/>
            <person name="Grechkin G."/>
            <person name="Zhu L."/>
            <person name="Vasieva O."/>
            <person name="Chu L."/>
            <person name="Kogan Y."/>
            <person name="Chaga O."/>
            <person name="Goltsman E."/>
            <person name="Bernal A."/>
            <person name="Larsen N."/>
            <person name="D'Souza M."/>
            <person name="Walunas T."/>
            <person name="Pusch G."/>
            <person name="Haselkorn R."/>
            <person name="Fonstein M."/>
            <person name="Kyrpides N.C."/>
            <person name="Overbeek R."/>
        </authorList>
    </citation>
    <scope>NUCLEOTIDE SEQUENCE [LARGE SCALE GENOMIC DNA]</scope>
    <source>
        <strain>ATCC 25586 / DSM 15643 / BCRC 10681 / CIP 101130 / JCM 8532 / KCTC 2640 / LMG 13131 / VPI 4355</strain>
    </source>
</reference>
<proteinExistence type="inferred from homology"/>
<dbReference type="EC" id="6.1.1.15" evidence="1"/>
<dbReference type="EMBL" id="AE009951">
    <property type="protein sequence ID" value="AAL93773.1"/>
    <property type="molecule type" value="Genomic_DNA"/>
</dbReference>
<dbReference type="RefSeq" id="NP_602474.1">
    <property type="nucleotide sequence ID" value="NC_003454.1"/>
</dbReference>
<dbReference type="RefSeq" id="WP_011015730.1">
    <property type="nucleotide sequence ID" value="NZ_CP028101.1"/>
</dbReference>
<dbReference type="SMR" id="Q8RIE2"/>
<dbReference type="FunCoup" id="Q8RIE2">
    <property type="interactions" value="279"/>
</dbReference>
<dbReference type="STRING" id="190304.FN1658"/>
<dbReference type="PaxDb" id="190304-FN1658"/>
<dbReference type="EnsemblBacteria" id="AAL93773">
    <property type="protein sequence ID" value="AAL93773"/>
    <property type="gene ID" value="FN1658"/>
</dbReference>
<dbReference type="GeneID" id="79782596"/>
<dbReference type="KEGG" id="fnu:FN1658"/>
<dbReference type="PATRIC" id="fig|190304.8.peg.151"/>
<dbReference type="eggNOG" id="COG0442">
    <property type="taxonomic scope" value="Bacteria"/>
</dbReference>
<dbReference type="HOGENOM" id="CLU_016739_0_0_0"/>
<dbReference type="InParanoid" id="Q8RIE2"/>
<dbReference type="BioCyc" id="FNUC190304:G1FZS-161-MONOMER"/>
<dbReference type="Proteomes" id="UP000002521">
    <property type="component" value="Chromosome"/>
</dbReference>
<dbReference type="GO" id="GO:0005829">
    <property type="term" value="C:cytosol"/>
    <property type="evidence" value="ECO:0000318"/>
    <property type="project" value="GO_Central"/>
</dbReference>
<dbReference type="GO" id="GO:0002161">
    <property type="term" value="F:aminoacyl-tRNA deacylase activity"/>
    <property type="evidence" value="ECO:0007669"/>
    <property type="project" value="InterPro"/>
</dbReference>
<dbReference type="GO" id="GO:0005524">
    <property type="term" value="F:ATP binding"/>
    <property type="evidence" value="ECO:0007669"/>
    <property type="project" value="UniProtKB-UniRule"/>
</dbReference>
<dbReference type="GO" id="GO:0004827">
    <property type="term" value="F:proline-tRNA ligase activity"/>
    <property type="evidence" value="ECO:0000318"/>
    <property type="project" value="GO_Central"/>
</dbReference>
<dbReference type="GO" id="GO:0006433">
    <property type="term" value="P:prolyl-tRNA aminoacylation"/>
    <property type="evidence" value="ECO:0000318"/>
    <property type="project" value="GO_Central"/>
</dbReference>
<dbReference type="CDD" id="cd04334">
    <property type="entry name" value="ProRS-INS"/>
    <property type="match status" value="1"/>
</dbReference>
<dbReference type="CDD" id="cd00861">
    <property type="entry name" value="ProRS_anticodon_short"/>
    <property type="match status" value="1"/>
</dbReference>
<dbReference type="CDD" id="cd00779">
    <property type="entry name" value="ProRS_core_prok"/>
    <property type="match status" value="1"/>
</dbReference>
<dbReference type="FunFam" id="3.30.930.10:FF:000043">
    <property type="entry name" value="Proline--tRNA ligase"/>
    <property type="match status" value="1"/>
</dbReference>
<dbReference type="FunFam" id="3.30.930.10:FF:000097">
    <property type="entry name" value="Proline--tRNA ligase"/>
    <property type="match status" value="1"/>
</dbReference>
<dbReference type="FunFam" id="3.40.50.800:FF:000011">
    <property type="entry name" value="Proline--tRNA ligase"/>
    <property type="match status" value="1"/>
</dbReference>
<dbReference type="Gene3D" id="3.40.50.800">
    <property type="entry name" value="Anticodon-binding domain"/>
    <property type="match status" value="1"/>
</dbReference>
<dbReference type="Gene3D" id="3.30.930.10">
    <property type="entry name" value="Bira Bifunctional Protein, Domain 2"/>
    <property type="match status" value="2"/>
</dbReference>
<dbReference type="HAMAP" id="MF_01569">
    <property type="entry name" value="Pro_tRNA_synth_type1"/>
    <property type="match status" value="1"/>
</dbReference>
<dbReference type="InterPro" id="IPR002314">
    <property type="entry name" value="aa-tRNA-synt_IIb"/>
</dbReference>
<dbReference type="InterPro" id="IPR006195">
    <property type="entry name" value="aa-tRNA-synth_II"/>
</dbReference>
<dbReference type="InterPro" id="IPR045864">
    <property type="entry name" value="aa-tRNA-synth_II/BPL/LPL"/>
</dbReference>
<dbReference type="InterPro" id="IPR004154">
    <property type="entry name" value="Anticodon-bd"/>
</dbReference>
<dbReference type="InterPro" id="IPR036621">
    <property type="entry name" value="Anticodon-bd_dom_sf"/>
</dbReference>
<dbReference type="InterPro" id="IPR002316">
    <property type="entry name" value="Pro-tRNA-ligase_IIa"/>
</dbReference>
<dbReference type="InterPro" id="IPR004500">
    <property type="entry name" value="Pro-tRNA-synth_IIa_bac-type"/>
</dbReference>
<dbReference type="InterPro" id="IPR023717">
    <property type="entry name" value="Pro-tRNA-Synthase_IIa_type1"/>
</dbReference>
<dbReference type="InterPro" id="IPR050062">
    <property type="entry name" value="Pro-tRNA_synthetase"/>
</dbReference>
<dbReference type="InterPro" id="IPR044140">
    <property type="entry name" value="ProRS_anticodon_short"/>
</dbReference>
<dbReference type="InterPro" id="IPR033730">
    <property type="entry name" value="ProRS_core_prok"/>
</dbReference>
<dbReference type="InterPro" id="IPR036754">
    <property type="entry name" value="YbaK/aa-tRNA-synt-asso_dom_sf"/>
</dbReference>
<dbReference type="InterPro" id="IPR007214">
    <property type="entry name" value="YbaK/aa-tRNA-synth-assoc-dom"/>
</dbReference>
<dbReference type="NCBIfam" id="NF006625">
    <property type="entry name" value="PRK09194.1"/>
    <property type="match status" value="1"/>
</dbReference>
<dbReference type="NCBIfam" id="TIGR00409">
    <property type="entry name" value="proS_fam_II"/>
    <property type="match status" value="1"/>
</dbReference>
<dbReference type="PANTHER" id="PTHR42753">
    <property type="entry name" value="MITOCHONDRIAL RIBOSOME PROTEIN L39/PROLYL-TRNA LIGASE FAMILY MEMBER"/>
    <property type="match status" value="1"/>
</dbReference>
<dbReference type="PANTHER" id="PTHR42753:SF2">
    <property type="entry name" value="PROLINE--TRNA LIGASE"/>
    <property type="match status" value="1"/>
</dbReference>
<dbReference type="Pfam" id="PF03129">
    <property type="entry name" value="HGTP_anticodon"/>
    <property type="match status" value="1"/>
</dbReference>
<dbReference type="Pfam" id="PF00587">
    <property type="entry name" value="tRNA-synt_2b"/>
    <property type="match status" value="1"/>
</dbReference>
<dbReference type="Pfam" id="PF04073">
    <property type="entry name" value="tRNA_edit"/>
    <property type="match status" value="1"/>
</dbReference>
<dbReference type="PIRSF" id="PIRSF001535">
    <property type="entry name" value="ProRS_1"/>
    <property type="match status" value="1"/>
</dbReference>
<dbReference type="PRINTS" id="PR01046">
    <property type="entry name" value="TRNASYNTHPRO"/>
</dbReference>
<dbReference type="SUPFAM" id="SSF52954">
    <property type="entry name" value="Class II aaRS ABD-related"/>
    <property type="match status" value="1"/>
</dbReference>
<dbReference type="SUPFAM" id="SSF55681">
    <property type="entry name" value="Class II aaRS and biotin synthetases"/>
    <property type="match status" value="1"/>
</dbReference>
<dbReference type="SUPFAM" id="SSF55826">
    <property type="entry name" value="YbaK/ProRS associated domain"/>
    <property type="match status" value="1"/>
</dbReference>
<dbReference type="PROSITE" id="PS50862">
    <property type="entry name" value="AA_TRNA_LIGASE_II"/>
    <property type="match status" value="1"/>
</dbReference>
<name>SYP_FUSNN</name>
<comment type="function">
    <text evidence="1">Catalyzes the attachment of proline to tRNA(Pro) in a two-step reaction: proline is first activated by ATP to form Pro-AMP and then transferred to the acceptor end of tRNA(Pro). As ProRS can inadvertently accommodate and process non-cognate amino acids such as alanine and cysteine, to avoid such errors it has two additional distinct editing activities against alanine. One activity is designated as 'pretransfer' editing and involves the tRNA(Pro)-independent hydrolysis of activated Ala-AMP. The other activity is designated 'posttransfer' editing and involves deacylation of mischarged Ala-tRNA(Pro). The misacylated Cys-tRNA(Pro) is not edited by ProRS.</text>
</comment>
<comment type="catalytic activity">
    <reaction evidence="1">
        <text>tRNA(Pro) + L-proline + ATP = L-prolyl-tRNA(Pro) + AMP + diphosphate</text>
        <dbReference type="Rhea" id="RHEA:14305"/>
        <dbReference type="Rhea" id="RHEA-COMP:9700"/>
        <dbReference type="Rhea" id="RHEA-COMP:9702"/>
        <dbReference type="ChEBI" id="CHEBI:30616"/>
        <dbReference type="ChEBI" id="CHEBI:33019"/>
        <dbReference type="ChEBI" id="CHEBI:60039"/>
        <dbReference type="ChEBI" id="CHEBI:78442"/>
        <dbReference type="ChEBI" id="CHEBI:78532"/>
        <dbReference type="ChEBI" id="CHEBI:456215"/>
        <dbReference type="EC" id="6.1.1.15"/>
    </reaction>
</comment>
<comment type="subunit">
    <text evidence="1">Homodimer.</text>
</comment>
<comment type="subcellular location">
    <subcellularLocation>
        <location evidence="1">Cytoplasm</location>
    </subcellularLocation>
</comment>
<comment type="domain">
    <text evidence="1">Consists of three domains: the N-terminal catalytic domain, the editing domain and the C-terminal anticodon-binding domain.</text>
</comment>
<comment type="similarity">
    <text evidence="1">Belongs to the class-II aminoacyl-tRNA synthetase family. ProS type 1 subfamily.</text>
</comment>
<protein>
    <recommendedName>
        <fullName evidence="1">Proline--tRNA ligase</fullName>
        <ecNumber evidence="1">6.1.1.15</ecNumber>
    </recommendedName>
    <alternativeName>
        <fullName evidence="1">Prolyl-tRNA synthetase</fullName>
        <shortName evidence="1">ProRS</shortName>
    </alternativeName>
</protein>
<gene>
    <name evidence="1" type="primary">proS</name>
    <name type="ordered locus">FN1658</name>
</gene>
<evidence type="ECO:0000255" key="1">
    <source>
        <dbReference type="HAMAP-Rule" id="MF_01569"/>
    </source>
</evidence>
<organism>
    <name type="scientific">Fusobacterium nucleatum subsp. nucleatum (strain ATCC 25586 / DSM 15643 / BCRC 10681 / CIP 101130 / JCM 8532 / KCTC 2640 / LMG 13131 / VPI 4355)</name>
    <dbReference type="NCBI Taxonomy" id="190304"/>
    <lineage>
        <taxon>Bacteria</taxon>
        <taxon>Fusobacteriati</taxon>
        <taxon>Fusobacteriota</taxon>
        <taxon>Fusobacteriia</taxon>
        <taxon>Fusobacteriales</taxon>
        <taxon>Fusobacteriaceae</taxon>
        <taxon>Fusobacterium</taxon>
    </lineage>
</organism>
<sequence>MRFSKAYIKTLKETPKEAEIASHKLMLRAGMIKKLASGIYAYLPLGYRTIKKIENIVREEMDRAGALELLMPVVQPAELWQESGRWDVMGPEMLRLKDRHERDFVLSPTQEEMITAIIRSDISSYKSLPINLYHIQTKFRDERRPRFGLMRGREFTMKDAYSFHTSQESLDEEFLNMRDTYTRIFTRCGLKFRPVDADSGNIGGSGSQEFQVLAESGEDEIIYSDGSEYAANIEKAVSELINPPKEELKEVELVHTPDCPTIESLAKYLDVPLERTVKALTYKDMGTDEIYMVLIRGDFEVNEVKLKNILNAVEVEMATDEEIEKIGLKKGYIGPYKLPAKIKIVADLSVPEVSNHIVGSHQKDYHYKNVNYDRDYTADIVTDIRKVRVGDNCITGGKLHSARGIECGQIFKLGDKYSKAMNATYLDEKGKTQFMLMGCYGIGVTRTMAASIEQNNDENGIIWPVSIAPYIVDVIPANIKNEVQVSLAEKIYNELQEEKIDVMLDDRDEKPGFKFKDADLIGFPFKVVVGKRADEGIVELKIRRTGETLEVSQNEVIAKIKELMRIY</sequence>
<keyword id="KW-0030">Aminoacyl-tRNA synthetase</keyword>
<keyword id="KW-0067">ATP-binding</keyword>
<keyword id="KW-0963">Cytoplasm</keyword>
<keyword id="KW-0436">Ligase</keyword>
<keyword id="KW-0547">Nucleotide-binding</keyword>
<keyword id="KW-0648">Protein biosynthesis</keyword>
<keyword id="KW-1185">Reference proteome</keyword>
<accession>Q8RIE2</accession>
<feature type="chain" id="PRO_0000248695" description="Proline--tRNA ligase">
    <location>
        <begin position="1"/>
        <end position="567"/>
    </location>
</feature>